<protein>
    <recommendedName>
        <fullName evidence="1">Membrane protein</fullName>
        <shortName evidence="1">M protein</shortName>
    </recommendedName>
    <alternativeName>
        <fullName evidence="1">E1 glycoprotein</fullName>
    </alternativeName>
    <alternativeName>
        <fullName evidence="1">Matrix glycoprotein</fullName>
    </alternativeName>
    <alternativeName>
        <fullName evidence="1">Membrane glycoprotein</fullName>
    </alternativeName>
</protein>
<organismHost>
    <name type="scientific">Gallus gallus</name>
    <name type="common">Chicken</name>
    <dbReference type="NCBI Taxonomy" id="9031"/>
</organismHost>
<dbReference type="EMBL" id="AY028295">
    <property type="protein sequence ID" value="AAK31606.1"/>
    <property type="molecule type" value="Genomic_RNA"/>
</dbReference>
<dbReference type="SMR" id="P69604"/>
<dbReference type="GO" id="GO:0044178">
    <property type="term" value="C:host cell Golgi membrane"/>
    <property type="evidence" value="ECO:0007669"/>
    <property type="project" value="UniProtKB-SubCell"/>
</dbReference>
<dbReference type="GO" id="GO:0016020">
    <property type="term" value="C:membrane"/>
    <property type="evidence" value="ECO:0007669"/>
    <property type="project" value="UniProtKB-UniRule"/>
</dbReference>
<dbReference type="GO" id="GO:0019031">
    <property type="term" value="C:viral envelope"/>
    <property type="evidence" value="ECO:0007669"/>
    <property type="project" value="UniProtKB-UniRule"/>
</dbReference>
<dbReference type="GO" id="GO:0055036">
    <property type="term" value="C:virion membrane"/>
    <property type="evidence" value="ECO:0007669"/>
    <property type="project" value="UniProtKB-SubCell"/>
</dbReference>
<dbReference type="GO" id="GO:0039660">
    <property type="term" value="F:structural constituent of virion"/>
    <property type="evidence" value="ECO:0007669"/>
    <property type="project" value="UniProtKB-UniRule"/>
</dbReference>
<dbReference type="CDD" id="cd21566">
    <property type="entry name" value="gammaCoV_M"/>
    <property type="match status" value="1"/>
</dbReference>
<dbReference type="HAMAP" id="MF_04203">
    <property type="entry name" value="GAMMA_CORONA_M"/>
    <property type="match status" value="1"/>
</dbReference>
<dbReference type="InterPro" id="IPR042550">
    <property type="entry name" value="GAMMA_CORONA_M"/>
</dbReference>
<dbReference type="InterPro" id="IPR002574">
    <property type="entry name" value="M_CoV"/>
</dbReference>
<dbReference type="Pfam" id="PF01635">
    <property type="entry name" value="CoV_M"/>
    <property type="match status" value="1"/>
</dbReference>
<dbReference type="PROSITE" id="PS51927">
    <property type="entry name" value="COV_M"/>
    <property type="match status" value="1"/>
</dbReference>
<name>VME1_IBVH1</name>
<feature type="chain" id="PRO_0000106052" description="Membrane protein">
    <location>
        <begin position="1"/>
        <end position="225"/>
    </location>
</feature>
<feature type="topological domain" description="Virion surface" evidence="1">
    <location>
        <begin position="1"/>
        <end position="20"/>
    </location>
</feature>
<feature type="transmembrane region" description="Helical" evidence="1">
    <location>
        <begin position="21"/>
        <end position="41"/>
    </location>
</feature>
<feature type="topological domain" description="Intravirion" evidence="1">
    <location>
        <begin position="42"/>
        <end position="51"/>
    </location>
</feature>
<feature type="transmembrane region" description="Helical" evidence="1">
    <location>
        <begin position="52"/>
        <end position="72"/>
    </location>
</feature>
<feature type="topological domain" description="Virion surface" evidence="1">
    <location>
        <begin position="73"/>
        <end position="77"/>
    </location>
</feature>
<feature type="transmembrane region" description="Helical" evidence="1">
    <location>
        <begin position="78"/>
        <end position="98"/>
    </location>
</feature>
<feature type="topological domain" description="Intravirion" evidence="1">
    <location>
        <begin position="99"/>
        <end position="225"/>
    </location>
</feature>
<sequence length="225" mass="25551">MSNETNCTLDFEQSVELFKEYNLFITAFLLFLTIILQYGYATRSKFIYILKMIVLWCFWPLNIAVGVISCIYPPNTGGLVAAIILTVFACLSFVGYWIQSIRLFKRCRSWWSFNPESNAVGSILLTNGQQCNFAIESVPMVLSPIIKNGVLYCEGQWLAKCEPDHLPKDIFVCTPDRRNIYRMVQKYIGDQSGNKKRFATFVYAKQSVDTGELESVATGGSSLYT</sequence>
<proteinExistence type="inferred from homology"/>
<organism>
    <name type="scientific">Avian infectious bronchitis virus (strain H120)</name>
    <name type="common">IBV</name>
    <dbReference type="NCBI Taxonomy" id="231424"/>
    <lineage>
        <taxon>Viruses</taxon>
        <taxon>Riboviria</taxon>
        <taxon>Orthornavirae</taxon>
        <taxon>Pisuviricota</taxon>
        <taxon>Pisoniviricetes</taxon>
        <taxon>Nidovirales</taxon>
        <taxon>Cornidovirineae</taxon>
        <taxon>Coronaviridae</taxon>
        <taxon>Orthocoronavirinae</taxon>
        <taxon>Gammacoronavirus</taxon>
        <taxon>Igacovirus</taxon>
        <taxon>Avian coronavirus</taxon>
    </lineage>
</organism>
<comment type="function">
    <text evidence="1 2">Component of the viral envelope that plays a central role in virus morphogenesis and assembly via its interactions with other viral proteins.</text>
</comment>
<comment type="subunit">
    <text evidence="1 2">Homomultimer. Interacts with envelope E protein in the budding compartment of the host cell, which is located between endoplasmic reticulum and the Golgi complex. Forms a complex with HE and S proteins. Interacts with nucleocapsid N protein. This interaction probably participates in RNA packaging into the virus.</text>
</comment>
<comment type="subcellular location">
    <subcellularLocation>
        <location evidence="1">Virion membrane</location>
        <topology evidence="1">Multi-pass membrane protein</topology>
    </subcellularLocation>
    <subcellularLocation>
        <location evidence="1">Host Golgi apparatus membrane</location>
        <topology evidence="1">Multi-pass membrane protein</topology>
    </subcellularLocation>
    <text evidence="1">Largely embedded in the lipid bilayer.</text>
</comment>
<comment type="similarity">
    <text evidence="1">Belongs to the gammacoronaviruses M protein family.</text>
</comment>
<keyword id="KW-0325">Glycoprotein</keyword>
<keyword id="KW-1040">Host Golgi apparatus</keyword>
<keyword id="KW-1043">Host membrane</keyword>
<keyword id="KW-0472">Membrane</keyword>
<keyword id="KW-0812">Transmembrane</keyword>
<keyword id="KW-1133">Transmembrane helix</keyword>
<keyword id="KW-0261">Viral envelope protein</keyword>
<keyword id="KW-0468">Viral matrix protein</keyword>
<keyword id="KW-0946">Virion</keyword>
<evidence type="ECO:0000255" key="1">
    <source>
        <dbReference type="HAMAP-Rule" id="MF_04203"/>
    </source>
</evidence>
<evidence type="ECO:0000255" key="2">
    <source>
        <dbReference type="PROSITE-ProRule" id="PRU01275"/>
    </source>
</evidence>
<reference key="1">
    <citation type="submission" date="2000-11" db="EMBL/GenBank/DDBJ databases">
        <title>Sequence analysis of matrix gene of avian infectious bronchitis virus strain D41.</title>
        <authorList>
            <person name="Cao W.S."/>
            <person name="Liao M."/>
            <person name="Ren T."/>
            <person name="Xin C.A."/>
        </authorList>
    </citation>
    <scope>NUCLEOTIDE SEQUENCE [GENOMIC RNA]</scope>
</reference>
<accession>P69604</accession>
<accession>Q9J4A6</accession>
<gene>
    <name evidence="1" type="primary">M</name>
</gene>